<reference key="1">
    <citation type="journal article" date="1997" name="Nature">
        <title>The complete genome sequence of the hyperthermophilic, sulphate-reducing archaeon Archaeoglobus fulgidus.</title>
        <authorList>
            <person name="Klenk H.-P."/>
            <person name="Clayton R.A."/>
            <person name="Tomb J.-F."/>
            <person name="White O."/>
            <person name="Nelson K.E."/>
            <person name="Ketchum K.A."/>
            <person name="Dodson R.J."/>
            <person name="Gwinn M.L."/>
            <person name="Hickey E.K."/>
            <person name="Peterson J.D."/>
            <person name="Richardson D.L."/>
            <person name="Kerlavage A.R."/>
            <person name="Graham D.E."/>
            <person name="Kyrpides N.C."/>
            <person name="Fleischmann R.D."/>
            <person name="Quackenbush J."/>
            <person name="Lee N.H."/>
            <person name="Sutton G.G."/>
            <person name="Gill S.R."/>
            <person name="Kirkness E.F."/>
            <person name="Dougherty B.A."/>
            <person name="McKenney K."/>
            <person name="Adams M.D."/>
            <person name="Loftus B.J."/>
            <person name="Peterson S.N."/>
            <person name="Reich C.I."/>
            <person name="McNeil L.K."/>
            <person name="Badger J.H."/>
            <person name="Glodek A."/>
            <person name="Zhou L."/>
            <person name="Overbeek R."/>
            <person name="Gocayne J.D."/>
            <person name="Weidman J.F."/>
            <person name="McDonald L.A."/>
            <person name="Utterback T.R."/>
            <person name="Cotton M.D."/>
            <person name="Spriggs T."/>
            <person name="Artiach P."/>
            <person name="Kaine B.P."/>
            <person name="Sykes S.M."/>
            <person name="Sadow P.W."/>
            <person name="D'Andrea K.P."/>
            <person name="Bowman C."/>
            <person name="Fujii C."/>
            <person name="Garland S.A."/>
            <person name="Mason T.M."/>
            <person name="Olsen G.J."/>
            <person name="Fraser C.M."/>
            <person name="Smith H.O."/>
            <person name="Woese C.R."/>
            <person name="Venter J.C."/>
        </authorList>
    </citation>
    <scope>NUCLEOTIDE SEQUENCE [LARGE SCALE GENOMIC DNA]</scope>
    <source>
        <strain>ATCC 49558 / DSM 4304 / JCM 9628 / NBRC 100126 / VC-16</strain>
    </source>
</reference>
<reference evidence="3 4" key="2">
    <citation type="journal article" date="2007" name="J. Mol. Biol.">
        <title>Structural insights into the second step of RNA-dependent cysteine biosynthesis in archaea: crystal structure of Sep-tRNA:Cys-tRNA synthase from Archaeoglobus fulgidus.</title>
        <authorList>
            <person name="Fukunaga R."/>
            <person name="Yokoyama S."/>
        </authorList>
    </citation>
    <scope>X-RAY CRYSTALLOGRAPHY (2.4 ANGSTROMS) IN COMPLEX WITH PYRIDOXAL-5'-PHOSPHATE</scope>
    <scope>FUNCTION</scope>
    <scope>PYRIDOXAL PHOSPHATE AT LYS-209</scope>
    <scope>SUBUNIT</scope>
</reference>
<proteinExistence type="evidence at protein level"/>
<protein>
    <recommendedName>
        <fullName>O-phospho-L-seryl-tRNA:Cys-tRNA synthase 1</fullName>
        <ecNumber>2.5.1.73</ecNumber>
    </recommendedName>
    <alternativeName>
        <fullName>Sep-tRNA:Cys-tRNA synthase 1</fullName>
        <shortName>SepCysS 1</shortName>
    </alternativeName>
</protein>
<gene>
    <name type="ordered locus">AF_0028</name>
</gene>
<keyword id="KW-0002">3D-structure</keyword>
<keyword id="KW-0648">Protein biosynthesis</keyword>
<keyword id="KW-0663">Pyridoxal phosphate</keyword>
<keyword id="KW-1185">Reference proteome</keyword>
<keyword id="KW-0808">Transferase</keyword>
<sequence length="371" mass="41930">MFKRETKDFINIDPLQTGGKLTEEARQALLEWGDGYSVCDFCTTGRLDEIKTPPIHDFIHNQLPKFLGCDVARVTNGAREAKFAVMHSLAKKDAWVVMDENCHYSSYVAAERAGLNIALVPKTDYPDYAITPENFAQTIEETKKRGEVVLALITYPDGNYGNLPDVKKIAKVCSEYDVPLLVNGAYAIGRMPVSLKEIGADFIVGSGHKSMAASGPIGVMGMKEEWAEIVLRRSEKYKNKEVELLGCTARGATIITLMASFPHVRERIKRWDEEVEKARRFAAEMEKLGIKQLGDNPHNHDLMFFHAEVLYEISKKAKGGRFFLYRELKSRKIHGIKPGLTRYFKLSTYGLSDEEVDYVLNAFKEIIEKYS</sequence>
<comment type="function">
    <text evidence="1">Converts O-phospho-L-seryl-tRNA(Cys) (Sep-tRNA(Cys)) to L-cysteinyl-tRNA(Cys) (Cys-tRNA(Cys)).</text>
</comment>
<comment type="catalytic activity">
    <reaction>
        <text>O-phospho-L-seryl-tRNA(Cys) + hydrogen sulfide + H(+) = L-cysteinyl-tRNA(Cys) + phosphate</text>
        <dbReference type="Rhea" id="RHEA:25686"/>
        <dbReference type="Rhea" id="RHEA-COMP:9679"/>
        <dbReference type="Rhea" id="RHEA-COMP:9719"/>
        <dbReference type="ChEBI" id="CHEBI:15378"/>
        <dbReference type="ChEBI" id="CHEBI:29919"/>
        <dbReference type="ChEBI" id="CHEBI:43474"/>
        <dbReference type="ChEBI" id="CHEBI:78517"/>
        <dbReference type="ChEBI" id="CHEBI:78551"/>
        <dbReference type="EC" id="2.5.1.73"/>
    </reaction>
</comment>
<comment type="cofactor">
    <cofactor>
        <name>pyridoxal 5'-phosphate</name>
        <dbReference type="ChEBI" id="CHEBI:597326"/>
    </cofactor>
</comment>
<comment type="subunit">
    <text evidence="1">Homodimer. Probably interacts with SepRS.</text>
</comment>
<comment type="similarity">
    <text evidence="2">Belongs to the SepCysS family.</text>
</comment>
<evidence type="ECO:0000269" key="1">
    <source>
    </source>
</evidence>
<evidence type="ECO:0000305" key="2"/>
<evidence type="ECO:0007744" key="3">
    <source>
        <dbReference type="PDB" id="2E7I"/>
    </source>
</evidence>
<evidence type="ECO:0007744" key="4">
    <source>
        <dbReference type="PDB" id="2E7J"/>
    </source>
</evidence>
<evidence type="ECO:0007829" key="5">
    <source>
        <dbReference type="PDB" id="2E7J"/>
    </source>
</evidence>
<organism>
    <name type="scientific">Archaeoglobus fulgidus (strain ATCC 49558 / DSM 4304 / JCM 9628 / NBRC 100126 / VC-16)</name>
    <dbReference type="NCBI Taxonomy" id="224325"/>
    <lineage>
        <taxon>Archaea</taxon>
        <taxon>Methanobacteriati</taxon>
        <taxon>Methanobacteriota</taxon>
        <taxon>Archaeoglobi</taxon>
        <taxon>Archaeoglobales</taxon>
        <taxon>Archaeoglobaceae</taxon>
        <taxon>Archaeoglobus</taxon>
    </lineage>
</organism>
<dbReference type="EC" id="2.5.1.73"/>
<dbReference type="EMBL" id="AE000782">
    <property type="protein sequence ID" value="AAB91200.1"/>
    <property type="molecule type" value="Genomic_DNA"/>
</dbReference>
<dbReference type="PIR" id="D69253">
    <property type="entry name" value="D69253"/>
</dbReference>
<dbReference type="RefSeq" id="WP_010877542.1">
    <property type="nucleotide sequence ID" value="NC_000917.1"/>
</dbReference>
<dbReference type="PDB" id="2E7I">
    <property type="method" value="X-ray"/>
    <property type="resolution" value="3.00 A"/>
    <property type="chains" value="A/B=1-371"/>
</dbReference>
<dbReference type="PDB" id="2E7J">
    <property type="method" value="X-ray"/>
    <property type="resolution" value="2.40 A"/>
    <property type="chains" value="A/B=1-371"/>
</dbReference>
<dbReference type="PDBsum" id="2E7I"/>
<dbReference type="PDBsum" id="2E7J"/>
<dbReference type="SMR" id="O30207"/>
<dbReference type="STRING" id="224325.AF_0028"/>
<dbReference type="PaxDb" id="224325-AF_0028"/>
<dbReference type="DNASU" id="1483238"/>
<dbReference type="EnsemblBacteria" id="AAB91200">
    <property type="protein sequence ID" value="AAB91200"/>
    <property type="gene ID" value="AF_0028"/>
</dbReference>
<dbReference type="GeneID" id="1483238"/>
<dbReference type="KEGG" id="afu:AF_0028"/>
<dbReference type="eggNOG" id="arCOG00091">
    <property type="taxonomic scope" value="Archaea"/>
</dbReference>
<dbReference type="HOGENOM" id="CLU_060476_0_0_2"/>
<dbReference type="OrthoDB" id="5817at2157"/>
<dbReference type="PhylomeDB" id="O30207"/>
<dbReference type="BRENDA" id="2.5.1.73">
    <property type="organism ID" value="414"/>
</dbReference>
<dbReference type="EvolutionaryTrace" id="O30207"/>
<dbReference type="Proteomes" id="UP000002199">
    <property type="component" value="Chromosome"/>
</dbReference>
<dbReference type="GO" id="GO:0043766">
    <property type="term" value="F:Sep-tRNA:Cys-tRNA synthase activity"/>
    <property type="evidence" value="ECO:0007669"/>
    <property type="project" value="UniProtKB-UniRule"/>
</dbReference>
<dbReference type="GO" id="GO:0006412">
    <property type="term" value="P:translation"/>
    <property type="evidence" value="ECO:0007669"/>
    <property type="project" value="UniProtKB-KW"/>
</dbReference>
<dbReference type="CDD" id="cd06452">
    <property type="entry name" value="SepCysS"/>
    <property type="match status" value="1"/>
</dbReference>
<dbReference type="Gene3D" id="3.90.1150.10">
    <property type="entry name" value="Aspartate Aminotransferase, domain 1"/>
    <property type="match status" value="1"/>
</dbReference>
<dbReference type="Gene3D" id="3.40.640.10">
    <property type="entry name" value="Type I PLP-dependent aspartate aminotransferase-like (Major domain)"/>
    <property type="match status" value="1"/>
</dbReference>
<dbReference type="HAMAP" id="MF_01675">
    <property type="entry name" value="Sep_Cys_tRNA_synth"/>
    <property type="match status" value="1"/>
</dbReference>
<dbReference type="InterPro" id="IPR015424">
    <property type="entry name" value="PyrdxlP-dep_Trfase"/>
</dbReference>
<dbReference type="InterPro" id="IPR015421">
    <property type="entry name" value="PyrdxlP-dep_Trfase_major"/>
</dbReference>
<dbReference type="InterPro" id="IPR015422">
    <property type="entry name" value="PyrdxlP-dep_Trfase_small"/>
</dbReference>
<dbReference type="InterPro" id="IPR013375">
    <property type="entry name" value="Sep_Cys-tRNA_synth_arc"/>
</dbReference>
<dbReference type="InterPro" id="IPR008829">
    <property type="entry name" value="SepSecS/SepCysS"/>
</dbReference>
<dbReference type="NCBIfam" id="NF006810">
    <property type="entry name" value="PRK09331.1"/>
    <property type="match status" value="1"/>
</dbReference>
<dbReference type="NCBIfam" id="TIGR02539">
    <property type="entry name" value="SepCysS"/>
    <property type="match status" value="1"/>
</dbReference>
<dbReference type="PANTHER" id="PTHR43586">
    <property type="entry name" value="CYSTEINE DESULFURASE"/>
    <property type="match status" value="1"/>
</dbReference>
<dbReference type="PANTHER" id="PTHR43586:SF3">
    <property type="entry name" value="O-PHOSPHO-L-SERYL-TRNA:CYS-TRNA SYNTHASE"/>
    <property type="match status" value="1"/>
</dbReference>
<dbReference type="Pfam" id="PF05889">
    <property type="entry name" value="SepSecS"/>
    <property type="match status" value="1"/>
</dbReference>
<dbReference type="SUPFAM" id="SSF53383">
    <property type="entry name" value="PLP-dependent transferases"/>
    <property type="match status" value="1"/>
</dbReference>
<feature type="chain" id="PRO_0000107477" description="O-phospho-L-seryl-tRNA:Cys-tRNA synthase 1">
    <location>
        <begin position="1"/>
        <end position="371"/>
    </location>
</feature>
<feature type="binding site" evidence="1 3 4">
    <location>
        <begin position="78"/>
        <end position="79"/>
    </location>
    <ligand>
        <name>pyridoxal 5'-phosphate</name>
        <dbReference type="ChEBI" id="CHEBI:597326"/>
    </ligand>
</feature>
<feature type="binding site" evidence="1">
    <location>
        <position position="183"/>
    </location>
    <ligand>
        <name>pyridoxal 5'-phosphate</name>
        <dbReference type="ChEBI" id="CHEBI:597326"/>
    </ligand>
</feature>
<feature type="binding site" evidence="1 3 4">
    <location>
        <begin position="206"/>
        <end position="208"/>
    </location>
    <ligand>
        <name>pyridoxal 5'-phosphate</name>
        <dbReference type="ChEBI" id="CHEBI:597326"/>
    </ligand>
</feature>
<feature type="modified residue" description="N6-(pyridoxal phosphate)lysine" evidence="1 3 4">
    <location>
        <position position="209"/>
    </location>
</feature>
<feature type="helix" evidence="5">
    <location>
        <begin position="14"/>
        <end position="17"/>
    </location>
</feature>
<feature type="helix" evidence="5">
    <location>
        <begin position="23"/>
        <end position="31"/>
    </location>
</feature>
<feature type="helix" evidence="5">
    <location>
        <begin position="55"/>
        <end position="60"/>
    </location>
</feature>
<feature type="helix" evidence="5">
    <location>
        <begin position="62"/>
        <end position="66"/>
    </location>
</feature>
<feature type="strand" evidence="5">
    <location>
        <begin position="69"/>
        <end position="77"/>
    </location>
</feature>
<feature type="helix" evidence="5">
    <location>
        <begin position="78"/>
        <end position="89"/>
    </location>
</feature>
<feature type="strand" evidence="5">
    <location>
        <begin position="95"/>
        <end position="99"/>
    </location>
</feature>
<feature type="helix" evidence="5">
    <location>
        <begin position="104"/>
        <end position="112"/>
    </location>
</feature>
<feature type="strand" evidence="5">
    <location>
        <begin position="116"/>
        <end position="120"/>
    </location>
</feature>
<feature type="turn" evidence="5">
    <location>
        <begin position="125"/>
        <end position="127"/>
    </location>
</feature>
<feature type="helix" evidence="5">
    <location>
        <begin position="132"/>
        <end position="142"/>
    </location>
</feature>
<feature type="turn" evidence="5">
    <location>
        <begin position="143"/>
        <end position="145"/>
    </location>
</feature>
<feature type="strand" evidence="5">
    <location>
        <begin position="148"/>
        <end position="156"/>
    </location>
</feature>
<feature type="turn" evidence="5">
    <location>
        <begin position="158"/>
        <end position="160"/>
    </location>
</feature>
<feature type="helix" evidence="5">
    <location>
        <begin position="166"/>
        <end position="174"/>
    </location>
</feature>
<feature type="turn" evidence="5">
    <location>
        <begin position="175"/>
        <end position="177"/>
    </location>
</feature>
<feature type="strand" evidence="5">
    <location>
        <begin position="180"/>
        <end position="183"/>
    </location>
</feature>
<feature type="turn" evidence="5">
    <location>
        <begin position="185"/>
        <end position="187"/>
    </location>
</feature>
<feature type="helix" evidence="5">
    <location>
        <begin position="195"/>
        <end position="198"/>
    </location>
</feature>
<feature type="strand" evidence="5">
    <location>
        <begin position="201"/>
        <end position="206"/>
    </location>
</feature>
<feature type="helix" evidence="5">
    <location>
        <begin position="207"/>
        <end position="210"/>
    </location>
</feature>
<feature type="strand" evidence="5">
    <location>
        <begin position="218"/>
        <end position="222"/>
    </location>
</feature>
<feature type="turn" evidence="5">
    <location>
        <begin position="224"/>
        <end position="231"/>
    </location>
</feature>
<feature type="helix" evidence="5">
    <location>
        <begin position="242"/>
        <end position="244"/>
    </location>
</feature>
<feature type="helix" evidence="5">
    <location>
        <begin position="252"/>
        <end position="267"/>
    </location>
</feature>
<feature type="helix" evidence="5">
    <location>
        <begin position="268"/>
        <end position="270"/>
    </location>
</feature>
<feature type="helix" evidence="5">
    <location>
        <begin position="271"/>
        <end position="287"/>
    </location>
</feature>
<feature type="strand" evidence="5">
    <location>
        <begin position="291"/>
        <end position="297"/>
    </location>
</feature>
<feature type="strand" evidence="5">
    <location>
        <begin position="300"/>
        <end position="306"/>
    </location>
</feature>
<feature type="helix" evidence="5">
    <location>
        <begin position="308"/>
        <end position="316"/>
    </location>
</feature>
<feature type="strand" evidence="5">
    <location>
        <begin position="317"/>
        <end position="319"/>
    </location>
</feature>
<feature type="helix" evidence="5">
    <location>
        <begin position="320"/>
        <end position="322"/>
    </location>
</feature>
<feature type="helix" evidence="5">
    <location>
        <begin position="323"/>
        <end position="330"/>
    </location>
</feature>
<feature type="strand" evidence="5">
    <location>
        <begin position="342"/>
        <end position="347"/>
    </location>
</feature>
<feature type="helix" evidence="5">
    <location>
        <begin position="353"/>
        <end position="369"/>
    </location>
</feature>
<accession>O30207</accession>
<name>SPSS1_ARCFU</name>